<proteinExistence type="inferred from homology"/>
<name>ASSY_ECO5E</name>
<accession>B5YS62</accession>
<comment type="catalytic activity">
    <reaction evidence="1">
        <text>L-citrulline + L-aspartate + ATP = 2-(N(omega)-L-arginino)succinate + AMP + diphosphate + H(+)</text>
        <dbReference type="Rhea" id="RHEA:10932"/>
        <dbReference type="ChEBI" id="CHEBI:15378"/>
        <dbReference type="ChEBI" id="CHEBI:29991"/>
        <dbReference type="ChEBI" id="CHEBI:30616"/>
        <dbReference type="ChEBI" id="CHEBI:33019"/>
        <dbReference type="ChEBI" id="CHEBI:57472"/>
        <dbReference type="ChEBI" id="CHEBI:57743"/>
        <dbReference type="ChEBI" id="CHEBI:456215"/>
        <dbReference type="EC" id="6.3.4.5"/>
    </reaction>
</comment>
<comment type="pathway">
    <text evidence="1">Amino-acid biosynthesis; L-arginine biosynthesis; L-arginine from L-ornithine and carbamoyl phosphate: step 2/3.</text>
</comment>
<comment type="subunit">
    <text evidence="1">Homotetramer.</text>
</comment>
<comment type="subcellular location">
    <subcellularLocation>
        <location evidence="1">Cytoplasm</location>
    </subcellularLocation>
</comment>
<comment type="similarity">
    <text evidence="1">Belongs to the argininosuccinate synthase family. Type 2 subfamily.</text>
</comment>
<keyword id="KW-0028">Amino-acid biosynthesis</keyword>
<keyword id="KW-0055">Arginine biosynthesis</keyword>
<keyword id="KW-0067">ATP-binding</keyword>
<keyword id="KW-0963">Cytoplasm</keyword>
<keyword id="KW-0436">Ligase</keyword>
<keyword id="KW-0547">Nucleotide-binding</keyword>
<organism>
    <name type="scientific">Escherichia coli O157:H7 (strain EC4115 / EHEC)</name>
    <dbReference type="NCBI Taxonomy" id="444450"/>
    <lineage>
        <taxon>Bacteria</taxon>
        <taxon>Pseudomonadati</taxon>
        <taxon>Pseudomonadota</taxon>
        <taxon>Gammaproteobacteria</taxon>
        <taxon>Enterobacterales</taxon>
        <taxon>Enterobacteriaceae</taxon>
        <taxon>Escherichia</taxon>
    </lineage>
</organism>
<sequence length="447" mass="49930">MTTILKHLPVGQRIGIAFSGGLDTSAALLWMRQKGAVPYAYTANLGQPDEEDYDAIPRRAMEYGAENARLIDCRKQLVAEGIAAIQCGAFHNTTGGLTYFNTTPLGRAVTGTMLVAAMKEDGVNIWGDGSTYKGNDIERFYRYGLLTNAELQIYKPWLDTDFIDELGGRHEMSEFMIACGFDYKMSVEKAYSTDSNMLGATHEAKDLEYLNSSVKIVNPIMGVKFWDESVKIPAEEVTVRFEQGHPVALNGKTFSDDVEMMLEANRIGGRHGLGMSDQIENRIIEAKSRGIYEAPGMALLHIAYERLLTGIHNEDTIEQYHAHGRQLGRLLYQGRWFDSQALMLRDSLQRWVASQITGEVTLELRRGNDYSILNTVSENLTYKPERLTMEKGDSVFSPDDRIGQLTMRNLDITDTREKLFGYAKTGLLSSSAASGVPQMENLENKGQ</sequence>
<reference key="1">
    <citation type="journal article" date="2011" name="Proc. Natl. Acad. Sci. U.S.A.">
        <title>Genomic anatomy of Escherichia coli O157:H7 outbreaks.</title>
        <authorList>
            <person name="Eppinger M."/>
            <person name="Mammel M.K."/>
            <person name="Leclerc J.E."/>
            <person name="Ravel J."/>
            <person name="Cebula T.A."/>
        </authorList>
    </citation>
    <scope>NUCLEOTIDE SEQUENCE [LARGE SCALE GENOMIC DNA]</scope>
    <source>
        <strain>EC4115 / EHEC</strain>
    </source>
</reference>
<gene>
    <name evidence="1" type="primary">argG</name>
    <name type="ordered locus">ECH74115_4494</name>
</gene>
<evidence type="ECO:0000255" key="1">
    <source>
        <dbReference type="HAMAP-Rule" id="MF_00581"/>
    </source>
</evidence>
<dbReference type="EC" id="6.3.4.5" evidence="1"/>
<dbReference type="EMBL" id="CP001164">
    <property type="protein sequence ID" value="ACI35465.1"/>
    <property type="molecule type" value="Genomic_DNA"/>
</dbReference>
<dbReference type="RefSeq" id="WP_000207678.1">
    <property type="nucleotide sequence ID" value="NC_011353.1"/>
</dbReference>
<dbReference type="SMR" id="B5YS62"/>
<dbReference type="GeneID" id="75173346"/>
<dbReference type="KEGG" id="ecf:ECH74115_4494"/>
<dbReference type="HOGENOM" id="CLU_032784_4_1_6"/>
<dbReference type="UniPathway" id="UPA00068">
    <property type="reaction ID" value="UER00113"/>
</dbReference>
<dbReference type="GO" id="GO:0005737">
    <property type="term" value="C:cytoplasm"/>
    <property type="evidence" value="ECO:0007669"/>
    <property type="project" value="UniProtKB-SubCell"/>
</dbReference>
<dbReference type="GO" id="GO:0004055">
    <property type="term" value="F:argininosuccinate synthase activity"/>
    <property type="evidence" value="ECO:0007669"/>
    <property type="project" value="UniProtKB-UniRule"/>
</dbReference>
<dbReference type="GO" id="GO:0005524">
    <property type="term" value="F:ATP binding"/>
    <property type="evidence" value="ECO:0007669"/>
    <property type="project" value="UniProtKB-UniRule"/>
</dbReference>
<dbReference type="GO" id="GO:0042803">
    <property type="term" value="F:protein homodimerization activity"/>
    <property type="evidence" value="ECO:0007669"/>
    <property type="project" value="InterPro"/>
</dbReference>
<dbReference type="GO" id="GO:0000053">
    <property type="term" value="P:argininosuccinate metabolic process"/>
    <property type="evidence" value="ECO:0007669"/>
    <property type="project" value="TreeGrafter"/>
</dbReference>
<dbReference type="GO" id="GO:0006526">
    <property type="term" value="P:L-arginine biosynthetic process"/>
    <property type="evidence" value="ECO:0007669"/>
    <property type="project" value="UniProtKB-UniRule"/>
</dbReference>
<dbReference type="GO" id="GO:0000050">
    <property type="term" value="P:urea cycle"/>
    <property type="evidence" value="ECO:0007669"/>
    <property type="project" value="TreeGrafter"/>
</dbReference>
<dbReference type="CDD" id="cd01999">
    <property type="entry name" value="ASS"/>
    <property type="match status" value="1"/>
</dbReference>
<dbReference type="FunFam" id="1.10.287.400:FF:000001">
    <property type="entry name" value="Argininosuccinate synthase"/>
    <property type="match status" value="1"/>
</dbReference>
<dbReference type="Gene3D" id="1.10.287.400">
    <property type="match status" value="1"/>
</dbReference>
<dbReference type="Gene3D" id="3.90.1260.10">
    <property type="entry name" value="Argininosuccinate synthetase, chain A, domain 2"/>
    <property type="match status" value="1"/>
</dbReference>
<dbReference type="Gene3D" id="3.40.50.620">
    <property type="entry name" value="HUPs"/>
    <property type="match status" value="1"/>
</dbReference>
<dbReference type="HAMAP" id="MF_00581">
    <property type="entry name" value="Arg_succ_synth_type2"/>
    <property type="match status" value="1"/>
</dbReference>
<dbReference type="InterPro" id="IPR023437">
    <property type="entry name" value="Arg_succ_synth_type2_subfam"/>
</dbReference>
<dbReference type="InterPro" id="IPR048268">
    <property type="entry name" value="Arginosuc_syn_C"/>
</dbReference>
<dbReference type="InterPro" id="IPR048267">
    <property type="entry name" value="Arginosuc_syn_N"/>
</dbReference>
<dbReference type="InterPro" id="IPR001518">
    <property type="entry name" value="Arginosuc_synth"/>
</dbReference>
<dbReference type="InterPro" id="IPR018223">
    <property type="entry name" value="Arginosuc_synth_CS"/>
</dbReference>
<dbReference type="InterPro" id="IPR023434">
    <property type="entry name" value="Arginosuc_synth_type_1_subfam"/>
</dbReference>
<dbReference type="InterPro" id="IPR024074">
    <property type="entry name" value="AS_cat/multimer_dom_body"/>
</dbReference>
<dbReference type="InterPro" id="IPR024073">
    <property type="entry name" value="AS_multimer_C_tail"/>
</dbReference>
<dbReference type="InterPro" id="IPR014729">
    <property type="entry name" value="Rossmann-like_a/b/a_fold"/>
</dbReference>
<dbReference type="NCBIfam" id="TIGR00032">
    <property type="entry name" value="argG"/>
    <property type="match status" value="1"/>
</dbReference>
<dbReference type="NCBIfam" id="NF003779">
    <property type="entry name" value="PRK05370.1"/>
    <property type="match status" value="1"/>
</dbReference>
<dbReference type="PANTHER" id="PTHR11587">
    <property type="entry name" value="ARGININOSUCCINATE SYNTHASE"/>
    <property type="match status" value="1"/>
</dbReference>
<dbReference type="PANTHER" id="PTHR11587:SF2">
    <property type="entry name" value="ARGININOSUCCINATE SYNTHASE"/>
    <property type="match status" value="1"/>
</dbReference>
<dbReference type="Pfam" id="PF20979">
    <property type="entry name" value="Arginosuc_syn_C"/>
    <property type="match status" value="1"/>
</dbReference>
<dbReference type="Pfam" id="PF00764">
    <property type="entry name" value="Arginosuc_synth"/>
    <property type="match status" value="1"/>
</dbReference>
<dbReference type="SUPFAM" id="SSF52402">
    <property type="entry name" value="Adenine nucleotide alpha hydrolases-like"/>
    <property type="match status" value="1"/>
</dbReference>
<dbReference type="SUPFAM" id="SSF69864">
    <property type="entry name" value="Argininosuccinate synthetase, C-terminal domain"/>
    <property type="match status" value="1"/>
</dbReference>
<dbReference type="PROSITE" id="PS00564">
    <property type="entry name" value="ARGININOSUCCIN_SYN_1"/>
    <property type="match status" value="1"/>
</dbReference>
<dbReference type="PROSITE" id="PS00565">
    <property type="entry name" value="ARGININOSUCCIN_SYN_2"/>
    <property type="match status" value="1"/>
</dbReference>
<feature type="chain" id="PRO_1000129746" description="Argininosuccinate synthase">
    <location>
        <begin position="1"/>
        <end position="447"/>
    </location>
</feature>
<feature type="binding site" evidence="1">
    <location>
        <begin position="17"/>
        <end position="25"/>
    </location>
    <ligand>
        <name>ATP</name>
        <dbReference type="ChEBI" id="CHEBI:30616"/>
    </ligand>
</feature>
<feature type="binding site" evidence="1">
    <location>
        <position position="43"/>
    </location>
    <ligand>
        <name>ATP</name>
        <dbReference type="ChEBI" id="CHEBI:30616"/>
    </ligand>
</feature>
<feature type="binding site" evidence="1">
    <location>
        <position position="99"/>
    </location>
    <ligand>
        <name>L-citrulline</name>
        <dbReference type="ChEBI" id="CHEBI:57743"/>
    </ligand>
</feature>
<feature type="binding site" evidence="1">
    <location>
        <position position="129"/>
    </location>
    <ligand>
        <name>ATP</name>
        <dbReference type="ChEBI" id="CHEBI:30616"/>
    </ligand>
</feature>
<feature type="binding site" evidence="1">
    <location>
        <position position="131"/>
    </location>
    <ligand>
        <name>ATP</name>
        <dbReference type="ChEBI" id="CHEBI:30616"/>
    </ligand>
</feature>
<feature type="binding site" evidence="1">
    <location>
        <position position="131"/>
    </location>
    <ligand>
        <name>L-aspartate</name>
        <dbReference type="ChEBI" id="CHEBI:29991"/>
    </ligand>
</feature>
<feature type="binding site" evidence="1">
    <location>
        <position position="135"/>
    </location>
    <ligand>
        <name>L-aspartate</name>
        <dbReference type="ChEBI" id="CHEBI:29991"/>
    </ligand>
</feature>
<feature type="binding site" evidence="1">
    <location>
        <position position="135"/>
    </location>
    <ligand>
        <name>L-citrulline</name>
        <dbReference type="ChEBI" id="CHEBI:57743"/>
    </ligand>
</feature>
<feature type="binding site" evidence="1">
    <location>
        <position position="136"/>
    </location>
    <ligand>
        <name>ATP</name>
        <dbReference type="ChEBI" id="CHEBI:30616"/>
    </ligand>
</feature>
<feature type="binding site" evidence="1">
    <location>
        <position position="136"/>
    </location>
    <ligand>
        <name>L-aspartate</name>
        <dbReference type="ChEBI" id="CHEBI:29991"/>
    </ligand>
</feature>
<feature type="binding site" evidence="1">
    <location>
        <position position="139"/>
    </location>
    <ligand>
        <name>L-citrulline</name>
        <dbReference type="ChEBI" id="CHEBI:57743"/>
    </ligand>
</feature>
<feature type="binding site" evidence="1">
    <location>
        <position position="192"/>
    </location>
    <ligand>
        <name>L-citrulline</name>
        <dbReference type="ChEBI" id="CHEBI:57743"/>
    </ligand>
</feature>
<feature type="binding site" evidence="1">
    <location>
        <position position="194"/>
    </location>
    <ligand>
        <name>ATP</name>
        <dbReference type="ChEBI" id="CHEBI:30616"/>
    </ligand>
</feature>
<feature type="binding site" evidence="1">
    <location>
        <position position="201"/>
    </location>
    <ligand>
        <name>L-citrulline</name>
        <dbReference type="ChEBI" id="CHEBI:57743"/>
    </ligand>
</feature>
<feature type="binding site" evidence="1">
    <location>
        <position position="203"/>
    </location>
    <ligand>
        <name>L-citrulline</name>
        <dbReference type="ChEBI" id="CHEBI:57743"/>
    </ligand>
</feature>
<feature type="binding site" evidence="1">
    <location>
        <position position="280"/>
    </location>
    <ligand>
        <name>L-citrulline</name>
        <dbReference type="ChEBI" id="CHEBI:57743"/>
    </ligand>
</feature>
<protein>
    <recommendedName>
        <fullName evidence="1">Argininosuccinate synthase</fullName>
        <ecNumber evidence="1">6.3.4.5</ecNumber>
    </recommendedName>
    <alternativeName>
        <fullName evidence="1">Citrulline--aspartate ligase</fullName>
    </alternativeName>
</protein>